<dbReference type="EC" id="4.1.1.65" evidence="1"/>
<dbReference type="EMBL" id="CP000236">
    <property type="protein sequence ID" value="ABD44643.1"/>
    <property type="molecule type" value="Genomic_DNA"/>
</dbReference>
<dbReference type="RefSeq" id="WP_006011451.1">
    <property type="nucleotide sequence ID" value="NC_007799.1"/>
</dbReference>
<dbReference type="STRING" id="205920.ECH_0779"/>
<dbReference type="KEGG" id="ech:ECH_0779"/>
<dbReference type="eggNOG" id="COG0688">
    <property type="taxonomic scope" value="Bacteria"/>
</dbReference>
<dbReference type="HOGENOM" id="CLU_072492_0_0_5"/>
<dbReference type="OrthoDB" id="9790893at2"/>
<dbReference type="UniPathway" id="UPA00558">
    <property type="reaction ID" value="UER00616"/>
</dbReference>
<dbReference type="Proteomes" id="UP000008320">
    <property type="component" value="Chromosome"/>
</dbReference>
<dbReference type="GO" id="GO:0005886">
    <property type="term" value="C:plasma membrane"/>
    <property type="evidence" value="ECO:0007669"/>
    <property type="project" value="UniProtKB-SubCell"/>
</dbReference>
<dbReference type="GO" id="GO:0004609">
    <property type="term" value="F:phosphatidylserine decarboxylase activity"/>
    <property type="evidence" value="ECO:0007669"/>
    <property type="project" value="UniProtKB-UniRule"/>
</dbReference>
<dbReference type="GO" id="GO:0006646">
    <property type="term" value="P:phosphatidylethanolamine biosynthetic process"/>
    <property type="evidence" value="ECO:0007669"/>
    <property type="project" value="UniProtKB-UniRule"/>
</dbReference>
<dbReference type="HAMAP" id="MF_00664">
    <property type="entry name" value="PS_decarb_PSD_A"/>
    <property type="match status" value="1"/>
</dbReference>
<dbReference type="InterPro" id="IPR003817">
    <property type="entry name" value="PS_Dcarbxylase"/>
</dbReference>
<dbReference type="InterPro" id="IPR033175">
    <property type="entry name" value="PSD-A"/>
</dbReference>
<dbReference type="NCBIfam" id="NF003678">
    <property type="entry name" value="PRK05305.1-2"/>
    <property type="match status" value="1"/>
</dbReference>
<dbReference type="NCBIfam" id="NF003684">
    <property type="entry name" value="PRK05305.2-4"/>
    <property type="match status" value="1"/>
</dbReference>
<dbReference type="NCBIfam" id="NF003685">
    <property type="entry name" value="PRK05305.2-5"/>
    <property type="match status" value="1"/>
</dbReference>
<dbReference type="PANTHER" id="PTHR35809">
    <property type="entry name" value="ARCHAETIDYLSERINE DECARBOXYLASE PROENZYME-RELATED"/>
    <property type="match status" value="1"/>
</dbReference>
<dbReference type="PANTHER" id="PTHR35809:SF1">
    <property type="entry name" value="ARCHAETIDYLSERINE DECARBOXYLASE PROENZYME-RELATED"/>
    <property type="match status" value="1"/>
</dbReference>
<dbReference type="Pfam" id="PF02666">
    <property type="entry name" value="PS_Dcarbxylase"/>
    <property type="match status" value="1"/>
</dbReference>
<accession>Q2GG56</accession>
<sequence length="226" mass="25072">MLYNFIHNIHKEGYIFIMISFLASCIGFAISCSLGIICLVISLLCIYFFRDPIRMVPEGDDLITSPADGLILDIKEVNSPIDDSTQVVCISIFLNVLNVHVNRIPVSGTIKATEYIPGRFISASLNKSSELNERQRLIIESKIDNRSIIVDQIAGLIARRIVCNVSEGQQVNSGERFGIIRFGSRVNLYLPLNTHISVFKGQTVIGGETILAYLQDAPKQLTVKSI</sequence>
<protein>
    <recommendedName>
        <fullName evidence="1">Phosphatidylserine decarboxylase proenzyme</fullName>
        <ecNumber evidence="1">4.1.1.65</ecNumber>
    </recommendedName>
    <component>
        <recommendedName>
            <fullName evidence="1">Phosphatidylserine decarboxylase alpha chain</fullName>
        </recommendedName>
    </component>
    <component>
        <recommendedName>
            <fullName evidence="1">Phosphatidylserine decarboxylase beta chain</fullName>
        </recommendedName>
    </component>
</protein>
<evidence type="ECO:0000255" key="1">
    <source>
        <dbReference type="HAMAP-Rule" id="MF_00664"/>
    </source>
</evidence>
<feature type="chain" id="PRO_0000262211" description="Phosphatidylserine decarboxylase beta chain" evidence="1">
    <location>
        <begin position="1"/>
        <end position="183"/>
    </location>
</feature>
<feature type="chain" id="PRO_0000262212" description="Phosphatidylserine decarboxylase alpha chain" evidence="1">
    <location>
        <begin position="184"/>
        <end position="226"/>
    </location>
</feature>
<feature type="active site" description="Schiff-base intermediate with substrate; via pyruvic acid" evidence="1">
    <location>
        <position position="184"/>
    </location>
</feature>
<feature type="site" description="Cleavage (non-hydrolytic); by autocatalysis" evidence="1">
    <location>
        <begin position="183"/>
        <end position="184"/>
    </location>
</feature>
<feature type="modified residue" description="Pyruvic acid (Ser); by autocatalysis" evidence="1">
    <location>
        <position position="184"/>
    </location>
</feature>
<keyword id="KW-1003">Cell membrane</keyword>
<keyword id="KW-0210">Decarboxylase</keyword>
<keyword id="KW-0444">Lipid biosynthesis</keyword>
<keyword id="KW-0443">Lipid metabolism</keyword>
<keyword id="KW-0456">Lyase</keyword>
<keyword id="KW-0472">Membrane</keyword>
<keyword id="KW-0594">Phospholipid biosynthesis</keyword>
<keyword id="KW-1208">Phospholipid metabolism</keyword>
<keyword id="KW-0670">Pyruvate</keyword>
<keyword id="KW-1185">Reference proteome</keyword>
<keyword id="KW-0865">Zymogen</keyword>
<proteinExistence type="inferred from homology"/>
<reference key="1">
    <citation type="journal article" date="2006" name="PLoS Genet.">
        <title>Comparative genomics of emerging human ehrlichiosis agents.</title>
        <authorList>
            <person name="Dunning Hotopp J.C."/>
            <person name="Lin M."/>
            <person name="Madupu R."/>
            <person name="Crabtree J."/>
            <person name="Angiuoli S.V."/>
            <person name="Eisen J.A."/>
            <person name="Seshadri R."/>
            <person name="Ren Q."/>
            <person name="Wu M."/>
            <person name="Utterback T.R."/>
            <person name="Smith S."/>
            <person name="Lewis M."/>
            <person name="Khouri H."/>
            <person name="Zhang C."/>
            <person name="Niu H."/>
            <person name="Lin Q."/>
            <person name="Ohashi N."/>
            <person name="Zhi N."/>
            <person name="Nelson W.C."/>
            <person name="Brinkac L.M."/>
            <person name="Dodson R.J."/>
            <person name="Rosovitz M.J."/>
            <person name="Sundaram J.P."/>
            <person name="Daugherty S.C."/>
            <person name="Davidsen T."/>
            <person name="Durkin A.S."/>
            <person name="Gwinn M.L."/>
            <person name="Haft D.H."/>
            <person name="Selengut J.D."/>
            <person name="Sullivan S.A."/>
            <person name="Zafar N."/>
            <person name="Zhou L."/>
            <person name="Benahmed F."/>
            <person name="Forberger H."/>
            <person name="Halpin R."/>
            <person name="Mulligan S."/>
            <person name="Robinson J."/>
            <person name="White O."/>
            <person name="Rikihisa Y."/>
            <person name="Tettelin H."/>
        </authorList>
    </citation>
    <scope>NUCLEOTIDE SEQUENCE [LARGE SCALE GENOMIC DNA]</scope>
    <source>
        <strain>ATCC CRL-10679 / Arkansas</strain>
    </source>
</reference>
<comment type="function">
    <text evidence="1">Catalyzes the formation of phosphatidylethanolamine (PtdEtn) from phosphatidylserine (PtdSer).</text>
</comment>
<comment type="catalytic activity">
    <reaction evidence="1">
        <text>a 1,2-diacyl-sn-glycero-3-phospho-L-serine + H(+) = a 1,2-diacyl-sn-glycero-3-phosphoethanolamine + CO2</text>
        <dbReference type="Rhea" id="RHEA:20828"/>
        <dbReference type="ChEBI" id="CHEBI:15378"/>
        <dbReference type="ChEBI" id="CHEBI:16526"/>
        <dbReference type="ChEBI" id="CHEBI:57262"/>
        <dbReference type="ChEBI" id="CHEBI:64612"/>
        <dbReference type="EC" id="4.1.1.65"/>
    </reaction>
</comment>
<comment type="cofactor">
    <cofactor evidence="1">
        <name>pyruvate</name>
        <dbReference type="ChEBI" id="CHEBI:15361"/>
    </cofactor>
    <text evidence="1">Binds 1 pyruvoyl group covalently per subunit.</text>
</comment>
<comment type="pathway">
    <text evidence="1">Phospholipid metabolism; phosphatidylethanolamine biosynthesis; phosphatidylethanolamine from CDP-diacylglycerol: step 2/2.</text>
</comment>
<comment type="subunit">
    <text evidence="1">Heterodimer of a large membrane-associated beta subunit and a small pyruvoyl-containing alpha subunit.</text>
</comment>
<comment type="subcellular location">
    <subcellularLocation>
        <location evidence="1">Cell membrane</location>
        <topology evidence="1">Peripheral membrane protein</topology>
    </subcellularLocation>
</comment>
<comment type="PTM">
    <text evidence="1">Is synthesized initially as an inactive proenzyme. Formation of the active enzyme involves a self-maturation process in which the active site pyruvoyl group is generated from an internal serine residue via an autocatalytic post-translational modification. Two non-identical subunits are generated from the proenzyme in this reaction, and the pyruvate is formed at the N-terminus of the alpha chain, which is derived from the carboxyl end of the proenzyme. The post-translation cleavage follows an unusual pathway, termed non-hydrolytic serinolysis, in which the side chain hydroxyl group of the serine supplies its oxygen atom to form the C-terminus of the beta chain, while the remainder of the serine residue undergoes an oxidative deamination to produce ammonia and the pyruvoyl prosthetic group on the alpha chain.</text>
</comment>
<comment type="similarity">
    <text evidence="1">Belongs to the phosphatidylserine decarboxylase family. PSD-A subfamily.</text>
</comment>
<gene>
    <name evidence="1" type="primary">psd</name>
    <name type="ordered locus">ECH_0779</name>
</gene>
<organism>
    <name type="scientific">Ehrlichia chaffeensis (strain ATCC CRL-10679 / Arkansas)</name>
    <dbReference type="NCBI Taxonomy" id="205920"/>
    <lineage>
        <taxon>Bacteria</taxon>
        <taxon>Pseudomonadati</taxon>
        <taxon>Pseudomonadota</taxon>
        <taxon>Alphaproteobacteria</taxon>
        <taxon>Rickettsiales</taxon>
        <taxon>Anaplasmataceae</taxon>
        <taxon>Ehrlichia</taxon>
    </lineage>
</organism>
<name>PSD_EHRCR</name>